<accession>Q96P66</accession>
<accession>Q5JSM8</accession>
<accession>Q8NG93</accession>
<feature type="chain" id="PRO_0000069601" description="Probable G-protein coupled receptor 101">
    <location>
        <begin position="1"/>
        <end position="508"/>
    </location>
</feature>
<feature type="topological domain" description="Extracellular" evidence="1">
    <location>
        <begin position="1"/>
        <end position="35"/>
    </location>
</feature>
<feature type="transmembrane region" description="Helical; Name=1" evidence="1">
    <location>
        <begin position="36"/>
        <end position="56"/>
    </location>
</feature>
<feature type="topological domain" description="Cytoplasmic" evidence="1">
    <location>
        <begin position="57"/>
        <end position="68"/>
    </location>
</feature>
<feature type="transmembrane region" description="Helical; Name=2" evidence="1">
    <location>
        <begin position="69"/>
        <end position="89"/>
    </location>
</feature>
<feature type="topological domain" description="Extracellular" evidence="1">
    <location>
        <begin position="90"/>
        <end position="106"/>
    </location>
</feature>
<feature type="transmembrane region" description="Helical; Name=3" evidence="1">
    <location>
        <begin position="107"/>
        <end position="127"/>
    </location>
</feature>
<feature type="topological domain" description="Cytoplasmic" evidence="1">
    <location>
        <begin position="128"/>
        <end position="149"/>
    </location>
</feature>
<feature type="transmembrane region" description="Helical; Name=4" evidence="1">
    <location>
        <begin position="150"/>
        <end position="170"/>
    </location>
</feature>
<feature type="topological domain" description="Extracellular" evidence="1">
    <location>
        <begin position="171"/>
        <end position="196"/>
    </location>
</feature>
<feature type="transmembrane region" description="Helical; Name=5" evidence="1">
    <location>
        <begin position="197"/>
        <end position="217"/>
    </location>
</feature>
<feature type="topological domain" description="Cytoplasmic" evidence="1">
    <location>
        <begin position="218"/>
        <end position="399"/>
    </location>
</feature>
<feature type="transmembrane region" description="Helical; Name=6" evidence="1">
    <location>
        <begin position="400"/>
        <end position="420"/>
    </location>
</feature>
<feature type="topological domain" description="Extracellular" evidence="1">
    <location>
        <begin position="421"/>
        <end position="433"/>
    </location>
</feature>
<feature type="transmembrane region" description="Helical; Name=7" evidence="1">
    <location>
        <begin position="434"/>
        <end position="454"/>
    </location>
</feature>
<feature type="topological domain" description="Cytoplasmic" evidence="1">
    <location>
        <begin position="455"/>
        <end position="508"/>
    </location>
</feature>
<feature type="region of interest" description="Disordered" evidence="3">
    <location>
        <begin position="244"/>
        <end position="338"/>
    </location>
</feature>
<feature type="region of interest" description="Disordered" evidence="3">
    <location>
        <begin position="476"/>
        <end position="508"/>
    </location>
</feature>
<feature type="compositionally biased region" description="Basic and acidic residues" evidence="3">
    <location>
        <begin position="250"/>
        <end position="288"/>
    </location>
</feature>
<feature type="compositionally biased region" description="Basic and acidic residues" evidence="3">
    <location>
        <begin position="318"/>
        <end position="338"/>
    </location>
</feature>
<feature type="compositionally biased region" description="Basic and acidic residues" evidence="3">
    <location>
        <begin position="476"/>
        <end position="485"/>
    </location>
</feature>
<feature type="glycosylation site" description="N-linked (GlcNAc...) asparagine" evidence="1">
    <location>
        <position position="7"/>
    </location>
</feature>
<feature type="glycosylation site" description="N-linked (GlcNAc...) asparagine" evidence="1">
    <location>
        <position position="13"/>
    </location>
</feature>
<feature type="disulfide bond" evidence="2">
    <location>
        <begin position="104"/>
        <end position="182"/>
    </location>
</feature>
<feature type="sequence variant" id="VAR_049398" description="In dbSNP:rs1190736.">
    <original>V</original>
    <variation>L</variation>
    <location>
        <position position="124"/>
    </location>
</feature>
<feature type="sequence variant" id="VAR_072691" description="In PITA2; dbSNP:rs73637412." evidence="4">
    <original>E</original>
    <variation>D</variation>
    <location>
        <position position="308"/>
    </location>
</feature>
<feature type="sequence variant" id="VAR_049399" description="In dbSNP:rs5931046.">
    <original>L</original>
    <variation>P</variation>
    <location>
        <position position="376"/>
    </location>
</feature>
<feature type="helix" evidence="6">
    <location>
        <begin position="28"/>
        <end position="58"/>
    </location>
</feature>
<feature type="strand" evidence="7">
    <location>
        <begin position="62"/>
        <end position="65"/>
    </location>
</feature>
<feature type="helix" evidence="6">
    <location>
        <begin position="66"/>
        <end position="92"/>
    </location>
</feature>
<feature type="strand" evidence="8">
    <location>
        <begin position="93"/>
        <end position="95"/>
    </location>
</feature>
<feature type="helix" evidence="6">
    <location>
        <begin position="101"/>
        <end position="134"/>
    </location>
</feature>
<feature type="turn" evidence="6">
    <location>
        <begin position="136"/>
        <end position="138"/>
    </location>
</feature>
<feature type="helix" evidence="6">
    <location>
        <begin position="139"/>
        <end position="142"/>
    </location>
</feature>
<feature type="helix" evidence="6">
    <location>
        <begin position="145"/>
        <end position="167"/>
    </location>
</feature>
<feature type="strand" evidence="7">
    <location>
        <begin position="168"/>
        <end position="170"/>
    </location>
</feature>
<feature type="strand" evidence="6">
    <location>
        <begin position="173"/>
        <end position="176"/>
    </location>
</feature>
<feature type="turn" evidence="6">
    <location>
        <begin position="177"/>
        <end position="180"/>
    </location>
</feature>
<feature type="strand" evidence="6">
    <location>
        <begin position="181"/>
        <end position="184"/>
    </location>
</feature>
<feature type="turn" evidence="6">
    <location>
        <begin position="186"/>
        <end position="188"/>
    </location>
</feature>
<feature type="helix" evidence="6">
    <location>
        <begin position="190"/>
        <end position="200"/>
    </location>
</feature>
<feature type="helix" evidence="6">
    <location>
        <begin position="202"/>
        <end position="227"/>
    </location>
</feature>
<feature type="helix" evidence="6">
    <location>
        <begin position="395"/>
        <end position="424"/>
    </location>
</feature>
<feature type="helix" evidence="6">
    <location>
        <begin position="427"/>
        <end position="430"/>
    </location>
</feature>
<feature type="helix" evidence="6">
    <location>
        <begin position="433"/>
        <end position="444"/>
    </location>
</feature>
<feature type="helix" evidence="6">
    <location>
        <begin position="446"/>
        <end position="454"/>
    </location>
</feature>
<feature type="turn" evidence="6">
    <location>
        <begin position="455"/>
        <end position="457"/>
    </location>
</feature>
<feature type="helix" evidence="6">
    <location>
        <begin position="459"/>
        <end position="472"/>
    </location>
</feature>
<comment type="function">
    <text>Orphan receptor.</text>
</comment>
<comment type="interaction">
    <interactant intactId="EBI-17935713">
        <id>Q96P66</id>
    </interactant>
    <interactant intactId="EBI-1754287">
        <id>Q9NRZ5</id>
        <label>AGPAT4</label>
    </interactant>
    <organismsDiffer>false</organismsDiffer>
    <experiments>3</experiments>
</comment>
<comment type="interaction">
    <interactant intactId="EBI-17935713">
        <id>Q96P66</id>
    </interactant>
    <interactant intactId="EBI-358858">
        <id>O14735</id>
        <label>CDIPT</label>
    </interactant>
    <organismsDiffer>false</organismsDiffer>
    <experiments>3</experiments>
</comment>
<comment type="interaction">
    <interactant intactId="EBI-17935713">
        <id>Q96P66</id>
    </interactant>
    <interactant intactId="EBI-10269179">
        <id>Q8NBI2</id>
        <label>CYB561A3</label>
    </interactant>
    <organismsDiffer>false</organismsDiffer>
    <experiments>3</experiments>
</comment>
<comment type="interaction">
    <interactant intactId="EBI-17935713">
        <id>Q96P66</id>
    </interactant>
    <interactant intactId="EBI-12831318">
        <id>Q96Q80</id>
        <label>DERL3</label>
    </interactant>
    <organismsDiffer>false</organismsDiffer>
    <experiments>3</experiments>
</comment>
<comment type="interaction">
    <interactant intactId="EBI-17935713">
        <id>Q96P66</id>
    </interactant>
    <interactant intactId="EBI-8070286">
        <id>O43561-2</id>
        <label>LAT</label>
    </interactant>
    <organismsDiffer>false</organismsDiffer>
    <experiments>3</experiments>
</comment>
<comment type="interaction">
    <interactant intactId="EBI-17935713">
        <id>Q96P66</id>
    </interactant>
    <interactant intactId="EBI-3920969">
        <id>Q6N075</id>
        <label>MFSD5</label>
    </interactant>
    <organismsDiffer>false</organismsDiffer>
    <experiments>3</experiments>
</comment>
<comment type="interaction">
    <interactant intactId="EBI-17935713">
        <id>Q96P66</id>
    </interactant>
    <interactant intactId="EBI-1246182">
        <id>Q9NX14</id>
        <label>NDUFB11</label>
    </interactant>
    <organismsDiffer>false</organismsDiffer>
    <experiments>3</experiments>
</comment>
<comment type="interaction">
    <interactant intactId="EBI-17935713">
        <id>Q96P66</id>
    </interactant>
    <interactant intactId="EBI-721750">
        <id>Q8N138</id>
        <label>ORMDL3</label>
    </interactant>
    <organismsDiffer>false</organismsDiffer>
    <experiments>3</experiments>
</comment>
<comment type="interaction">
    <interactant intactId="EBI-17935713">
        <id>Q96P66</id>
    </interactant>
    <interactant intactId="EBI-10244780">
        <id>Q5QGT7</id>
        <label>RTP2</label>
    </interactant>
    <organismsDiffer>false</organismsDiffer>
    <experiments>3</experiments>
</comment>
<comment type="interaction">
    <interactant intactId="EBI-17935713">
        <id>Q96P66</id>
    </interactant>
    <interactant intactId="EBI-12867720">
        <id>Q6ICL7</id>
        <label>SLC35E4</label>
    </interactant>
    <organismsDiffer>false</organismsDiffer>
    <experiments>3</experiments>
</comment>
<comment type="interaction">
    <interactant intactId="EBI-17935713">
        <id>Q96P66</id>
    </interactant>
    <interactant intactId="EBI-2823239">
        <id>Q9NUM3</id>
        <label>SLC39A9</label>
    </interactant>
    <organismsDiffer>false</organismsDiffer>
    <experiments>3</experiments>
</comment>
<comment type="interaction">
    <interactant intactId="EBI-17935713">
        <id>Q96P66</id>
    </interactant>
    <interactant intactId="EBI-12266234">
        <id>Q8IVJ1</id>
        <label>SLC41A1</label>
    </interactant>
    <organismsDiffer>false</organismsDiffer>
    <experiments>3</experiments>
</comment>
<comment type="interaction">
    <interactant intactId="EBI-17935713">
        <id>Q96P66</id>
    </interactant>
    <interactant intactId="EBI-311394">
        <id>Q9C0I4</id>
        <label>THSD7B</label>
    </interactant>
    <organismsDiffer>false</organismsDiffer>
    <experiments>3</experiments>
</comment>
<comment type="interaction">
    <interactant intactId="EBI-17935713">
        <id>Q96P66</id>
    </interactant>
    <interactant intactId="EBI-8650934">
        <id>P48230</id>
        <label>TM4SF4</label>
    </interactant>
    <organismsDiffer>false</organismsDiffer>
    <experiments>3</experiments>
</comment>
<comment type="interaction">
    <interactant intactId="EBI-17935713">
        <id>Q96P66</id>
    </interactant>
    <interactant intactId="EBI-348587">
        <id>Q9BVK8</id>
        <label>TMEM147</label>
    </interactant>
    <organismsDiffer>false</organismsDiffer>
    <experiments>3</experiments>
</comment>
<comment type="interaction">
    <interactant intactId="EBI-17935713">
        <id>Q96P66</id>
    </interactant>
    <interactant intactId="EBI-11528917">
        <id>Q8WW34-2</id>
        <label>TMEM239</label>
    </interactant>
    <organismsDiffer>false</organismsDiffer>
    <experiments>3</experiments>
</comment>
<comment type="interaction">
    <interactant intactId="EBI-17935713">
        <id>Q96P66</id>
    </interactant>
    <interactant intactId="EBI-13356252">
        <id>Q86WB7-2</id>
        <label>UNC93A</label>
    </interactant>
    <organismsDiffer>false</organismsDiffer>
    <experiments>3</experiments>
</comment>
<comment type="interaction">
    <interactant intactId="EBI-17935713">
        <id>Q96P66</id>
    </interactant>
    <interactant intactId="EBI-4401271">
        <id>Q9H1C4</id>
        <label>UNC93B1</label>
    </interactant>
    <organismsDiffer>false</organismsDiffer>
    <experiments>3</experiments>
</comment>
<comment type="interaction">
    <interactant intactId="EBI-17935713">
        <id>Q96P66</id>
    </interactant>
    <interactant intactId="EBI-751210">
        <id>Q96EC8</id>
        <label>YIPF6</label>
    </interactant>
    <organismsDiffer>false</organismsDiffer>
    <experiments>3</experiments>
</comment>
<comment type="subcellular location">
    <subcellularLocation>
        <location>Cell membrane</location>
        <topology>Multi-pass membrane protein</topology>
    </subcellularLocation>
</comment>
<comment type="disease" evidence="4">
    <disease id="DI-04304">
        <name>Pituitary adenoma 2, growth hormone-secreting</name>
        <acronym>PITA2</acronym>
        <description>A form of pituitary adenoma, a neoplasm of the pituitary gland and one of the most common neuroendocrine tumors. Pituitary adenomas are clinically classified as functional and non-functional tumors, and manifest with a variety of features, including local invasion of surrounding structures and excessive hormone secretion. Functional pituitary adenomas are further classified by the type of hormone they secrete. PITA2 is a growth hormone-secreting benign neoplasm, also known as somatotropinoma. It clinically results in acromegaly, a condition characterized by coarse facial features, protruding jaw, and enlarged extremities. Excessive production of growth hormone in children or adolescents before the closure of epiphyses causes gigantism, a condition characterized by abnormally tall stature.</description>
        <dbReference type="MIM" id="300943"/>
    </disease>
    <text>The disease is caused by variants affecting the gene represented in this entry.</text>
</comment>
<comment type="similarity">
    <text evidence="2">Belongs to the G-protein coupled receptor 1 family.</text>
</comment>
<comment type="sequence caution" evidence="5">
    <conflict type="erroneous initiation">
        <sequence resource="EMBL-CDS" id="BAC06152"/>
    </conflict>
    <text>Extended N-terminus.</text>
</comment>
<name>GP101_HUMAN</name>
<proteinExistence type="evidence at protein level"/>
<sequence length="508" mass="56716">MTSTCTNSTRESNSSHTCMPLSKMPISLAHGIIRSTVLVIFLAASFVGNIVLALVLQRKPQLLQVTNRFIFNLLVTDLLQISLVAPWVVATSVPLFWPLNSHFCTALVSLTHLFAFASVNTIVVVSVDRYLSIIHPLSYPSKMTQRRGYLLLYGTWIVAILQSTPPLYGWGQAAFDERNALCSMIWGASPSYTILSVVSFIVIPLIVMIACYSVVFCAARRQHALLYNVKRHSLEVRVKDCVENEDEEGAEKKEEFQDESEFRRQHEGEVKAKEGRMEAKDGSLKAKEGSTGTSESSVEARGSEEVRESSTVASDGSMEGKEGSTKVEENSMKADKGRTEVNQCSIDLGEDDMEFGEDDINFSEDDVEAVNIPESLPPSRRNSNSNPPLPRCYQCKAAKVIFIIIFSYVLSLGPYCFLAVLAVWVDVETQVPQWVITIIIWLFFLQCCIHPYVYGYMHKTIKKEIQDMLKKFFCKEKPPKEDSHPDLPGTEGGTEGKIVPSYDSATFP</sequence>
<protein>
    <recommendedName>
        <fullName>Probable G-protein coupled receptor 101</fullName>
    </recommendedName>
</protein>
<dbReference type="EMBL" id="AF411115">
    <property type="protein sequence ID" value="AAL26486.1"/>
    <property type="molecule type" value="Genomic_DNA"/>
</dbReference>
<dbReference type="EMBL" id="AB083588">
    <property type="protein sequence ID" value="BAB89301.1"/>
    <property type="molecule type" value="Genomic_DNA"/>
</dbReference>
<dbReference type="EMBL" id="AB065937">
    <property type="protein sequence ID" value="BAC06152.1"/>
    <property type="status" value="ALT_INIT"/>
    <property type="molecule type" value="Genomic_DNA"/>
</dbReference>
<dbReference type="EMBL" id="AL390879">
    <property type="status" value="NOT_ANNOTATED_CDS"/>
    <property type="molecule type" value="Genomic_DNA"/>
</dbReference>
<dbReference type="EMBL" id="CH471150">
    <property type="protein sequence ID" value="EAW88450.1"/>
    <property type="molecule type" value="Genomic_DNA"/>
</dbReference>
<dbReference type="EMBL" id="BC069439">
    <property type="protein sequence ID" value="AAH69439.1"/>
    <property type="molecule type" value="mRNA"/>
</dbReference>
<dbReference type="CCDS" id="CCDS14662.1"/>
<dbReference type="RefSeq" id="NP_473362.1">
    <property type="nucleotide sequence ID" value="NM_054021.2"/>
</dbReference>
<dbReference type="PDB" id="8W8Q">
    <property type="method" value="EM"/>
    <property type="resolution" value="2.89 A"/>
    <property type="chains" value="C=1-508"/>
</dbReference>
<dbReference type="PDB" id="8W8R">
    <property type="method" value="EM"/>
    <property type="resolution" value="3.30 A"/>
    <property type="chains" value="R=1-508"/>
</dbReference>
<dbReference type="PDB" id="8W8S">
    <property type="method" value="EM"/>
    <property type="resolution" value="3.30 A"/>
    <property type="chains" value="R=1-508"/>
</dbReference>
<dbReference type="PDBsum" id="8W8Q"/>
<dbReference type="PDBsum" id="8W8R"/>
<dbReference type="PDBsum" id="8W8S"/>
<dbReference type="EMDB" id="EMD-37356"/>
<dbReference type="EMDB" id="EMD-37357"/>
<dbReference type="EMDB" id="EMD-37358"/>
<dbReference type="SMR" id="Q96P66"/>
<dbReference type="BioGRID" id="123682">
    <property type="interactions" value="26"/>
</dbReference>
<dbReference type="FunCoup" id="Q96P66">
    <property type="interactions" value="35"/>
</dbReference>
<dbReference type="IntAct" id="Q96P66">
    <property type="interactions" value="21"/>
</dbReference>
<dbReference type="STRING" id="9606.ENSP00000498972"/>
<dbReference type="ChEMBL" id="CHEMBL4523906"/>
<dbReference type="GlyCosmos" id="Q96P66">
    <property type="glycosylation" value="2 sites, No reported glycans"/>
</dbReference>
<dbReference type="GlyGen" id="Q96P66">
    <property type="glycosylation" value="3 sites, 1 O-linked glycan (1 site)"/>
</dbReference>
<dbReference type="iPTMnet" id="Q96P66"/>
<dbReference type="PhosphoSitePlus" id="Q96P66"/>
<dbReference type="BioMuta" id="GPR101"/>
<dbReference type="DMDM" id="48474929"/>
<dbReference type="PaxDb" id="9606-ENSP00000298110"/>
<dbReference type="PeptideAtlas" id="Q96P66"/>
<dbReference type="ProteomicsDB" id="77640"/>
<dbReference type="Antibodypedia" id="392">
    <property type="antibodies" value="246 antibodies from 31 providers"/>
</dbReference>
<dbReference type="DNASU" id="83550"/>
<dbReference type="Ensembl" id="ENST00000651716.2">
    <property type="protein sequence ID" value="ENSP00000498972.1"/>
    <property type="gene ID" value="ENSG00000165370.3"/>
</dbReference>
<dbReference type="GeneID" id="83550"/>
<dbReference type="KEGG" id="hsa:83550"/>
<dbReference type="MANE-Select" id="ENST00000651716.2">
    <property type="protein sequence ID" value="ENSP00000498972.1"/>
    <property type="RefSeq nucleotide sequence ID" value="NM_054021.2"/>
    <property type="RefSeq protein sequence ID" value="NP_473362.1"/>
</dbReference>
<dbReference type="UCSC" id="uc011mwh.2">
    <property type="organism name" value="human"/>
</dbReference>
<dbReference type="AGR" id="HGNC:14963"/>
<dbReference type="CTD" id="83550"/>
<dbReference type="DisGeNET" id="83550"/>
<dbReference type="GeneCards" id="GPR101"/>
<dbReference type="GeneReviews" id="GPR101"/>
<dbReference type="HGNC" id="HGNC:14963">
    <property type="gene designation" value="GPR101"/>
</dbReference>
<dbReference type="HPA" id="ENSG00000165370">
    <property type="expression patterns" value="Tissue enriched (brain)"/>
</dbReference>
<dbReference type="MalaCards" id="GPR101"/>
<dbReference type="MIM" id="300393">
    <property type="type" value="gene"/>
</dbReference>
<dbReference type="MIM" id="300943">
    <property type="type" value="phenotype"/>
</dbReference>
<dbReference type="neXtProt" id="NX_Q96P66"/>
<dbReference type="OpenTargets" id="ENSG00000165370"/>
<dbReference type="Orphanet" id="963">
    <property type="disease" value="Acromegaly"/>
</dbReference>
<dbReference type="PharmGKB" id="PA28849"/>
<dbReference type="VEuPathDB" id="HostDB:ENSG00000165370"/>
<dbReference type="eggNOG" id="KOG3656">
    <property type="taxonomic scope" value="Eukaryota"/>
</dbReference>
<dbReference type="GeneTree" id="ENSGT00940000162539"/>
<dbReference type="HOGENOM" id="CLU_009579_3_13_1"/>
<dbReference type="InParanoid" id="Q96P66"/>
<dbReference type="OMA" id="TPRRGYM"/>
<dbReference type="OrthoDB" id="5980076at2759"/>
<dbReference type="PAN-GO" id="Q96P66">
    <property type="GO annotations" value="3 GO annotations based on evolutionary models"/>
</dbReference>
<dbReference type="PhylomeDB" id="Q96P66"/>
<dbReference type="TreeFam" id="TF331895"/>
<dbReference type="PathwayCommons" id="Q96P66"/>
<dbReference type="SignaLink" id="Q96P66"/>
<dbReference type="BioGRID-ORCS" id="83550">
    <property type="hits" value="12 hits in 762 CRISPR screens"/>
</dbReference>
<dbReference type="GeneWiki" id="GPR101"/>
<dbReference type="GenomeRNAi" id="83550"/>
<dbReference type="Pharos" id="Q96P66">
    <property type="development level" value="Tbio"/>
</dbReference>
<dbReference type="PRO" id="PR:Q96P66"/>
<dbReference type="Proteomes" id="UP000005640">
    <property type="component" value="Chromosome X"/>
</dbReference>
<dbReference type="RNAct" id="Q96P66">
    <property type="molecule type" value="protein"/>
</dbReference>
<dbReference type="Bgee" id="ENSG00000165370">
    <property type="expression patterns" value="Expressed in nucleus accumbens and 16 other cell types or tissues"/>
</dbReference>
<dbReference type="GO" id="GO:0005886">
    <property type="term" value="C:plasma membrane"/>
    <property type="evidence" value="ECO:0000318"/>
    <property type="project" value="GO_Central"/>
</dbReference>
<dbReference type="GO" id="GO:0043235">
    <property type="term" value="C:receptor complex"/>
    <property type="evidence" value="ECO:0000314"/>
    <property type="project" value="MGI"/>
</dbReference>
<dbReference type="GO" id="GO:0004930">
    <property type="term" value="F:G protein-coupled receptor activity"/>
    <property type="evidence" value="ECO:0000318"/>
    <property type="project" value="GO_Central"/>
</dbReference>
<dbReference type="GO" id="GO:0071880">
    <property type="term" value="P:adenylate cyclase-activating adrenergic receptor signaling pathway"/>
    <property type="evidence" value="ECO:0000318"/>
    <property type="project" value="GO_Central"/>
</dbReference>
<dbReference type="GO" id="GO:0043410">
    <property type="term" value="P:positive regulation of MAPK cascade"/>
    <property type="evidence" value="ECO:0000318"/>
    <property type="project" value="GO_Central"/>
</dbReference>
<dbReference type="CDD" id="cd15215">
    <property type="entry name" value="7tmA_GPR101"/>
    <property type="match status" value="1"/>
</dbReference>
<dbReference type="Gene3D" id="1.20.1070.10">
    <property type="entry name" value="Rhodopsin 7-helix transmembrane proteins"/>
    <property type="match status" value="1"/>
</dbReference>
<dbReference type="InterPro" id="IPR000276">
    <property type="entry name" value="GPCR_Rhodpsn"/>
</dbReference>
<dbReference type="InterPro" id="IPR017452">
    <property type="entry name" value="GPCR_Rhodpsn_7TM"/>
</dbReference>
<dbReference type="PANTHER" id="PTHR22752">
    <property type="entry name" value="G PROTEIN-COUPLED RECEPTOR"/>
    <property type="match status" value="1"/>
</dbReference>
<dbReference type="PANTHER" id="PTHR22752:SF15">
    <property type="entry name" value="G-PROTEIN COUPLED RECEPTOR 101-RELATED"/>
    <property type="match status" value="1"/>
</dbReference>
<dbReference type="Pfam" id="PF00001">
    <property type="entry name" value="7tm_1"/>
    <property type="match status" value="1"/>
</dbReference>
<dbReference type="PRINTS" id="PR00237">
    <property type="entry name" value="GPCRRHODOPSN"/>
</dbReference>
<dbReference type="SUPFAM" id="SSF81321">
    <property type="entry name" value="Family A G protein-coupled receptor-like"/>
    <property type="match status" value="1"/>
</dbReference>
<dbReference type="PROSITE" id="PS00237">
    <property type="entry name" value="G_PROTEIN_RECEP_F1_1"/>
    <property type="match status" value="1"/>
</dbReference>
<dbReference type="PROSITE" id="PS50262">
    <property type="entry name" value="G_PROTEIN_RECEP_F1_2"/>
    <property type="match status" value="1"/>
</dbReference>
<reference key="1">
    <citation type="journal article" date="2001" name="Gene">
        <title>Discovery and mapping of ten novel G protein-coupled receptor genes.</title>
        <authorList>
            <person name="Lee D.K."/>
            <person name="Nguyen T."/>
            <person name="Lynch K.R."/>
            <person name="Cheng R."/>
            <person name="Vanti W.B."/>
            <person name="Arkhitko O."/>
            <person name="Lewis T."/>
            <person name="Evans J.F."/>
            <person name="George S.R."/>
            <person name="O'Dowd B.F."/>
        </authorList>
    </citation>
    <scope>NUCLEOTIDE SEQUENCE [GENOMIC DNA]</scope>
</reference>
<reference key="2">
    <citation type="journal article" date="2002" name="FEBS Lett.">
        <title>Identification of G protein-coupled receptor genes from the human genome sequence.</title>
        <authorList>
            <person name="Takeda S."/>
            <person name="Kadowaki S."/>
            <person name="Haga T."/>
            <person name="Takaesu H."/>
            <person name="Mitaku S."/>
        </authorList>
    </citation>
    <scope>NUCLEOTIDE SEQUENCE [LARGE SCALE GENOMIC DNA]</scope>
</reference>
<reference key="3">
    <citation type="submission" date="2005-09" db="EMBL/GenBank/DDBJ databases">
        <authorList>
            <person name="Mural R.J."/>
            <person name="Istrail S."/>
            <person name="Sutton G.G."/>
            <person name="Florea L."/>
            <person name="Halpern A.L."/>
            <person name="Mobarry C.M."/>
            <person name="Lippert R."/>
            <person name="Walenz B."/>
            <person name="Shatkay H."/>
            <person name="Dew I."/>
            <person name="Miller J.R."/>
            <person name="Flanigan M.J."/>
            <person name="Edwards N.J."/>
            <person name="Bolanos R."/>
            <person name="Fasulo D."/>
            <person name="Halldorsson B.V."/>
            <person name="Hannenhalli S."/>
            <person name="Turner R."/>
            <person name="Yooseph S."/>
            <person name="Lu F."/>
            <person name="Nusskern D.R."/>
            <person name="Shue B.C."/>
            <person name="Zheng X.H."/>
            <person name="Zhong F."/>
            <person name="Delcher A.L."/>
            <person name="Huson D.H."/>
            <person name="Kravitz S.A."/>
            <person name="Mouchard L."/>
            <person name="Reinert K."/>
            <person name="Remington K.A."/>
            <person name="Clark A.G."/>
            <person name="Waterman M.S."/>
            <person name="Eichler E.E."/>
            <person name="Adams M.D."/>
            <person name="Hunkapiller M.W."/>
            <person name="Myers E.W."/>
            <person name="Venter J.C."/>
        </authorList>
    </citation>
    <scope>NUCLEOTIDE SEQUENCE [LARGE SCALE GENOMIC DNA]</scope>
</reference>
<reference key="4">
    <citation type="submission" date="2001-07" db="EMBL/GenBank/DDBJ databases">
        <title>Genome-wide discovery and analysis of human seven transmembrane helix receptor genes.</title>
        <authorList>
            <person name="Suwa M."/>
            <person name="Sato T."/>
            <person name="Okouchi I."/>
            <person name="Arita M."/>
            <person name="Futami K."/>
            <person name="Matsumoto S."/>
            <person name="Tsutsumi S."/>
            <person name="Aburatani H."/>
            <person name="Asai K."/>
            <person name="Akiyama Y."/>
        </authorList>
    </citation>
    <scope>NUCLEOTIDE SEQUENCE [GENOMIC DNA]</scope>
</reference>
<reference key="5">
    <citation type="journal article" date="2005" name="Nature">
        <title>The DNA sequence of the human X chromosome.</title>
        <authorList>
            <person name="Ross M.T."/>
            <person name="Grafham D.V."/>
            <person name="Coffey A.J."/>
            <person name="Scherer S."/>
            <person name="McLay K."/>
            <person name="Muzny D."/>
            <person name="Platzer M."/>
            <person name="Howell G.R."/>
            <person name="Burrows C."/>
            <person name="Bird C.P."/>
            <person name="Frankish A."/>
            <person name="Lovell F.L."/>
            <person name="Howe K.L."/>
            <person name="Ashurst J.L."/>
            <person name="Fulton R.S."/>
            <person name="Sudbrak R."/>
            <person name="Wen G."/>
            <person name="Jones M.C."/>
            <person name="Hurles M.E."/>
            <person name="Andrews T.D."/>
            <person name="Scott C.E."/>
            <person name="Searle S."/>
            <person name="Ramser J."/>
            <person name="Whittaker A."/>
            <person name="Deadman R."/>
            <person name="Carter N.P."/>
            <person name="Hunt S.E."/>
            <person name="Chen R."/>
            <person name="Cree A."/>
            <person name="Gunaratne P."/>
            <person name="Havlak P."/>
            <person name="Hodgson A."/>
            <person name="Metzker M.L."/>
            <person name="Richards S."/>
            <person name="Scott G."/>
            <person name="Steffen D."/>
            <person name="Sodergren E."/>
            <person name="Wheeler D.A."/>
            <person name="Worley K.C."/>
            <person name="Ainscough R."/>
            <person name="Ambrose K.D."/>
            <person name="Ansari-Lari M.A."/>
            <person name="Aradhya S."/>
            <person name="Ashwell R.I."/>
            <person name="Babbage A.K."/>
            <person name="Bagguley C.L."/>
            <person name="Ballabio A."/>
            <person name="Banerjee R."/>
            <person name="Barker G.E."/>
            <person name="Barlow K.F."/>
            <person name="Barrett I.P."/>
            <person name="Bates K.N."/>
            <person name="Beare D.M."/>
            <person name="Beasley H."/>
            <person name="Beasley O."/>
            <person name="Beck A."/>
            <person name="Bethel G."/>
            <person name="Blechschmidt K."/>
            <person name="Brady N."/>
            <person name="Bray-Allen S."/>
            <person name="Bridgeman A.M."/>
            <person name="Brown A.J."/>
            <person name="Brown M.J."/>
            <person name="Bonnin D."/>
            <person name="Bruford E.A."/>
            <person name="Buhay C."/>
            <person name="Burch P."/>
            <person name="Burford D."/>
            <person name="Burgess J."/>
            <person name="Burrill W."/>
            <person name="Burton J."/>
            <person name="Bye J.M."/>
            <person name="Carder C."/>
            <person name="Carrel L."/>
            <person name="Chako J."/>
            <person name="Chapman J.C."/>
            <person name="Chavez D."/>
            <person name="Chen E."/>
            <person name="Chen G."/>
            <person name="Chen Y."/>
            <person name="Chen Z."/>
            <person name="Chinault C."/>
            <person name="Ciccodicola A."/>
            <person name="Clark S.Y."/>
            <person name="Clarke G."/>
            <person name="Clee C.M."/>
            <person name="Clegg S."/>
            <person name="Clerc-Blankenburg K."/>
            <person name="Clifford K."/>
            <person name="Cobley V."/>
            <person name="Cole C.G."/>
            <person name="Conquer J.S."/>
            <person name="Corby N."/>
            <person name="Connor R.E."/>
            <person name="David R."/>
            <person name="Davies J."/>
            <person name="Davis C."/>
            <person name="Davis J."/>
            <person name="Delgado O."/>
            <person name="Deshazo D."/>
            <person name="Dhami P."/>
            <person name="Ding Y."/>
            <person name="Dinh H."/>
            <person name="Dodsworth S."/>
            <person name="Draper H."/>
            <person name="Dugan-Rocha S."/>
            <person name="Dunham A."/>
            <person name="Dunn M."/>
            <person name="Durbin K.J."/>
            <person name="Dutta I."/>
            <person name="Eades T."/>
            <person name="Ellwood M."/>
            <person name="Emery-Cohen A."/>
            <person name="Errington H."/>
            <person name="Evans K.L."/>
            <person name="Faulkner L."/>
            <person name="Francis F."/>
            <person name="Frankland J."/>
            <person name="Fraser A.E."/>
            <person name="Galgoczy P."/>
            <person name="Gilbert J."/>
            <person name="Gill R."/>
            <person name="Gloeckner G."/>
            <person name="Gregory S.G."/>
            <person name="Gribble S."/>
            <person name="Griffiths C."/>
            <person name="Grocock R."/>
            <person name="Gu Y."/>
            <person name="Gwilliam R."/>
            <person name="Hamilton C."/>
            <person name="Hart E.A."/>
            <person name="Hawes A."/>
            <person name="Heath P.D."/>
            <person name="Heitmann K."/>
            <person name="Hennig S."/>
            <person name="Hernandez J."/>
            <person name="Hinzmann B."/>
            <person name="Ho S."/>
            <person name="Hoffs M."/>
            <person name="Howden P.J."/>
            <person name="Huckle E.J."/>
            <person name="Hume J."/>
            <person name="Hunt P.J."/>
            <person name="Hunt A.R."/>
            <person name="Isherwood J."/>
            <person name="Jacob L."/>
            <person name="Johnson D."/>
            <person name="Jones S."/>
            <person name="de Jong P.J."/>
            <person name="Joseph S.S."/>
            <person name="Keenan S."/>
            <person name="Kelly S."/>
            <person name="Kershaw J.K."/>
            <person name="Khan Z."/>
            <person name="Kioschis P."/>
            <person name="Klages S."/>
            <person name="Knights A.J."/>
            <person name="Kosiura A."/>
            <person name="Kovar-Smith C."/>
            <person name="Laird G.K."/>
            <person name="Langford C."/>
            <person name="Lawlor S."/>
            <person name="Leversha M."/>
            <person name="Lewis L."/>
            <person name="Liu W."/>
            <person name="Lloyd C."/>
            <person name="Lloyd D.M."/>
            <person name="Loulseged H."/>
            <person name="Loveland J.E."/>
            <person name="Lovell J.D."/>
            <person name="Lozado R."/>
            <person name="Lu J."/>
            <person name="Lyne R."/>
            <person name="Ma J."/>
            <person name="Maheshwari M."/>
            <person name="Matthews L.H."/>
            <person name="McDowall J."/>
            <person name="McLaren S."/>
            <person name="McMurray A."/>
            <person name="Meidl P."/>
            <person name="Meitinger T."/>
            <person name="Milne S."/>
            <person name="Miner G."/>
            <person name="Mistry S.L."/>
            <person name="Morgan M."/>
            <person name="Morris S."/>
            <person name="Mueller I."/>
            <person name="Mullikin J.C."/>
            <person name="Nguyen N."/>
            <person name="Nordsiek G."/>
            <person name="Nyakatura G."/>
            <person name="O'dell C.N."/>
            <person name="Okwuonu G."/>
            <person name="Palmer S."/>
            <person name="Pandian R."/>
            <person name="Parker D."/>
            <person name="Parrish J."/>
            <person name="Pasternak S."/>
            <person name="Patel D."/>
            <person name="Pearce A.V."/>
            <person name="Pearson D.M."/>
            <person name="Pelan S.E."/>
            <person name="Perez L."/>
            <person name="Porter K.M."/>
            <person name="Ramsey Y."/>
            <person name="Reichwald K."/>
            <person name="Rhodes S."/>
            <person name="Ridler K.A."/>
            <person name="Schlessinger D."/>
            <person name="Schueler M.G."/>
            <person name="Sehra H.K."/>
            <person name="Shaw-Smith C."/>
            <person name="Shen H."/>
            <person name="Sheridan E.M."/>
            <person name="Shownkeen R."/>
            <person name="Skuce C.D."/>
            <person name="Smith M.L."/>
            <person name="Sotheran E.C."/>
            <person name="Steingruber H.E."/>
            <person name="Steward C.A."/>
            <person name="Storey R."/>
            <person name="Swann R.M."/>
            <person name="Swarbreck D."/>
            <person name="Tabor P.E."/>
            <person name="Taudien S."/>
            <person name="Taylor T."/>
            <person name="Teague B."/>
            <person name="Thomas K."/>
            <person name="Thorpe A."/>
            <person name="Timms K."/>
            <person name="Tracey A."/>
            <person name="Trevanion S."/>
            <person name="Tromans A.C."/>
            <person name="d'Urso M."/>
            <person name="Verduzco D."/>
            <person name="Villasana D."/>
            <person name="Waldron L."/>
            <person name="Wall M."/>
            <person name="Wang Q."/>
            <person name="Warren J."/>
            <person name="Warry G.L."/>
            <person name="Wei X."/>
            <person name="West A."/>
            <person name="Whitehead S.L."/>
            <person name="Whiteley M.N."/>
            <person name="Wilkinson J.E."/>
            <person name="Willey D.L."/>
            <person name="Williams G."/>
            <person name="Williams L."/>
            <person name="Williamson A."/>
            <person name="Williamson H."/>
            <person name="Wilming L."/>
            <person name="Woodmansey R.L."/>
            <person name="Wray P.W."/>
            <person name="Yen J."/>
            <person name="Zhang J."/>
            <person name="Zhou J."/>
            <person name="Zoghbi H."/>
            <person name="Zorilla S."/>
            <person name="Buck D."/>
            <person name="Reinhardt R."/>
            <person name="Poustka A."/>
            <person name="Rosenthal A."/>
            <person name="Lehrach H."/>
            <person name="Meindl A."/>
            <person name="Minx P.J."/>
            <person name="Hillier L.W."/>
            <person name="Willard H.F."/>
            <person name="Wilson R.K."/>
            <person name="Waterston R.H."/>
            <person name="Rice C.M."/>
            <person name="Vaudin M."/>
            <person name="Coulson A."/>
            <person name="Nelson D.L."/>
            <person name="Weinstock G."/>
            <person name="Sulston J.E."/>
            <person name="Durbin R.M."/>
            <person name="Hubbard T."/>
            <person name="Gibbs R.A."/>
            <person name="Beck S."/>
            <person name="Rogers J."/>
            <person name="Bentley D.R."/>
        </authorList>
    </citation>
    <scope>NUCLEOTIDE SEQUENCE [LARGE SCALE GENOMIC DNA]</scope>
</reference>
<reference key="6">
    <citation type="journal article" date="2004" name="Genome Res.">
        <title>The status, quality, and expansion of the NIH full-length cDNA project: the Mammalian Gene Collection (MGC).</title>
        <authorList>
            <consortium name="The MGC Project Team"/>
        </authorList>
    </citation>
    <scope>NUCLEOTIDE SEQUENCE [LARGE SCALE MRNA]</scope>
</reference>
<reference key="7">
    <citation type="journal article" date="2014" name="N. Engl. J. Med.">
        <title>Gigantism and acromegaly due to Xq26 microduplications and GPR101 mutation.</title>
        <authorList>
            <person name="Trivellin G."/>
            <person name="Daly A.F."/>
            <person name="Faucz F.R."/>
            <person name="Yuan B."/>
            <person name="Rostomyan L."/>
            <person name="Larco D.O."/>
            <person name="Schernthaner-Reiter M.H."/>
            <person name="Szarek E."/>
            <person name="Leal L.F."/>
            <person name="Caberg J.H."/>
            <person name="Castermans E."/>
            <person name="Villa C."/>
            <person name="Dimopoulos A."/>
            <person name="Chittiboina P."/>
            <person name="Xekouki P."/>
            <person name="Shah N."/>
            <person name="Metzger D."/>
            <person name="Lysy P.A."/>
            <person name="Ferrante E."/>
            <person name="Strebkova N."/>
            <person name="Mazerkina N."/>
            <person name="Zatelli M.C."/>
            <person name="Lodish M."/>
            <person name="Horvath A."/>
            <person name="de Alexandre R.B."/>
            <person name="Manning A.D."/>
            <person name="Levy I."/>
            <person name="Keil M.F."/>
            <person name="Sierra M.L."/>
            <person name="Palmeira L."/>
            <person name="Coppieters W."/>
            <person name="Georges M."/>
            <person name="Naves L.A."/>
            <person name="Jamar M."/>
            <person name="Bours V."/>
            <person name="Wu T.J."/>
            <person name="Choong C.S."/>
            <person name="Bertherat J."/>
            <person name="Chanson P."/>
            <person name="Kamenicky P."/>
            <person name="Farrell W.E."/>
            <person name="Barlier A."/>
            <person name="Quezado M."/>
            <person name="Bjelobaba I."/>
            <person name="Stojilkovic S.S."/>
            <person name="Wess J."/>
            <person name="Costanzi S."/>
            <person name="Liu P."/>
            <person name="Lupski J.R."/>
            <person name="Beckers A."/>
            <person name="Stratakis C.A."/>
        </authorList>
    </citation>
    <scope>INVOLVEMENT IN PITA2</scope>
    <scope>VARIANT PITA2 ASP-308</scope>
</reference>
<keyword id="KW-0002">3D-structure</keyword>
<keyword id="KW-1003">Cell membrane</keyword>
<keyword id="KW-0225">Disease variant</keyword>
<keyword id="KW-1015">Disulfide bond</keyword>
<keyword id="KW-0297">G-protein coupled receptor</keyword>
<keyword id="KW-0325">Glycoprotein</keyword>
<keyword id="KW-0472">Membrane</keyword>
<keyword id="KW-0675">Receptor</keyword>
<keyword id="KW-1185">Reference proteome</keyword>
<keyword id="KW-0807">Transducer</keyword>
<keyword id="KW-0812">Transmembrane</keyword>
<keyword id="KW-1133">Transmembrane helix</keyword>
<gene>
    <name type="primary">GPR101</name>
</gene>
<evidence type="ECO:0000255" key="1"/>
<evidence type="ECO:0000255" key="2">
    <source>
        <dbReference type="PROSITE-ProRule" id="PRU00521"/>
    </source>
</evidence>
<evidence type="ECO:0000256" key="3">
    <source>
        <dbReference type="SAM" id="MobiDB-lite"/>
    </source>
</evidence>
<evidence type="ECO:0000269" key="4">
    <source>
    </source>
</evidence>
<evidence type="ECO:0000305" key="5"/>
<evidence type="ECO:0007829" key="6">
    <source>
        <dbReference type="PDB" id="8W8Q"/>
    </source>
</evidence>
<evidence type="ECO:0007829" key="7">
    <source>
        <dbReference type="PDB" id="8W8R"/>
    </source>
</evidence>
<evidence type="ECO:0007829" key="8">
    <source>
        <dbReference type="PDB" id="8W8S"/>
    </source>
</evidence>
<organism>
    <name type="scientific">Homo sapiens</name>
    <name type="common">Human</name>
    <dbReference type="NCBI Taxonomy" id="9606"/>
    <lineage>
        <taxon>Eukaryota</taxon>
        <taxon>Metazoa</taxon>
        <taxon>Chordata</taxon>
        <taxon>Craniata</taxon>
        <taxon>Vertebrata</taxon>
        <taxon>Euteleostomi</taxon>
        <taxon>Mammalia</taxon>
        <taxon>Eutheria</taxon>
        <taxon>Euarchontoglires</taxon>
        <taxon>Primates</taxon>
        <taxon>Haplorrhini</taxon>
        <taxon>Catarrhini</taxon>
        <taxon>Hominidae</taxon>
        <taxon>Homo</taxon>
    </lineage>
</organism>